<gene>
    <name evidence="1" type="primary">potA</name>
    <name type="ordered locus">OEOE_0630</name>
</gene>
<feature type="chain" id="PRO_0000286268" description="Spermidine/putrescine import ATP-binding protein PotA">
    <location>
        <begin position="1"/>
        <end position="367"/>
    </location>
</feature>
<feature type="domain" description="ABC transporter" evidence="1">
    <location>
        <begin position="10"/>
        <end position="240"/>
    </location>
</feature>
<feature type="binding site" evidence="1">
    <location>
        <begin position="42"/>
        <end position="49"/>
    </location>
    <ligand>
        <name>ATP</name>
        <dbReference type="ChEBI" id="CHEBI:30616"/>
    </ligand>
</feature>
<organism>
    <name type="scientific">Oenococcus oeni (strain ATCC BAA-331 / PSU-1)</name>
    <dbReference type="NCBI Taxonomy" id="203123"/>
    <lineage>
        <taxon>Bacteria</taxon>
        <taxon>Bacillati</taxon>
        <taxon>Bacillota</taxon>
        <taxon>Bacilli</taxon>
        <taxon>Lactobacillales</taxon>
        <taxon>Lactobacillaceae</taxon>
        <taxon>Oenococcus</taxon>
    </lineage>
</organism>
<dbReference type="EC" id="7.6.2.11" evidence="1"/>
<dbReference type="EMBL" id="CP000411">
    <property type="protein sequence ID" value="ABJ56572.1"/>
    <property type="status" value="ALT_INIT"/>
    <property type="molecule type" value="Genomic_DNA"/>
</dbReference>
<dbReference type="RefSeq" id="WP_032804491.1">
    <property type="nucleotide sequence ID" value="NC_008528.1"/>
</dbReference>
<dbReference type="SMR" id="Q04G50"/>
<dbReference type="STRING" id="203123.OEOE_0630"/>
<dbReference type="KEGG" id="ooe:OEOE_0630"/>
<dbReference type="PATRIC" id="fig|203123.7.peg.641"/>
<dbReference type="eggNOG" id="COG3842">
    <property type="taxonomic scope" value="Bacteria"/>
</dbReference>
<dbReference type="HOGENOM" id="CLU_000604_1_1_9"/>
<dbReference type="Proteomes" id="UP000000774">
    <property type="component" value="Chromosome"/>
</dbReference>
<dbReference type="GO" id="GO:0043190">
    <property type="term" value="C:ATP-binding cassette (ABC) transporter complex"/>
    <property type="evidence" value="ECO:0007669"/>
    <property type="project" value="InterPro"/>
</dbReference>
<dbReference type="GO" id="GO:0015417">
    <property type="term" value="F:ABC-type polyamine transporter activity"/>
    <property type="evidence" value="ECO:0007669"/>
    <property type="project" value="UniProtKB-EC"/>
</dbReference>
<dbReference type="GO" id="GO:0005524">
    <property type="term" value="F:ATP binding"/>
    <property type="evidence" value="ECO:0007669"/>
    <property type="project" value="UniProtKB-KW"/>
</dbReference>
<dbReference type="GO" id="GO:0016887">
    <property type="term" value="F:ATP hydrolysis activity"/>
    <property type="evidence" value="ECO:0007669"/>
    <property type="project" value="InterPro"/>
</dbReference>
<dbReference type="FunFam" id="3.40.50.300:FF:000425">
    <property type="entry name" value="Probable ABC transporter, ATP-binding subunit"/>
    <property type="match status" value="1"/>
</dbReference>
<dbReference type="Gene3D" id="2.40.50.100">
    <property type="match status" value="1"/>
</dbReference>
<dbReference type="Gene3D" id="3.40.50.300">
    <property type="entry name" value="P-loop containing nucleotide triphosphate hydrolases"/>
    <property type="match status" value="1"/>
</dbReference>
<dbReference type="InterPro" id="IPR003593">
    <property type="entry name" value="AAA+_ATPase"/>
</dbReference>
<dbReference type="InterPro" id="IPR050093">
    <property type="entry name" value="ABC_SmlMolc_Importer"/>
</dbReference>
<dbReference type="InterPro" id="IPR003439">
    <property type="entry name" value="ABC_transporter-like_ATP-bd"/>
</dbReference>
<dbReference type="InterPro" id="IPR017871">
    <property type="entry name" value="ABC_transporter-like_CS"/>
</dbReference>
<dbReference type="InterPro" id="IPR008995">
    <property type="entry name" value="Mo/tungstate-bd_C_term_dom"/>
</dbReference>
<dbReference type="InterPro" id="IPR027417">
    <property type="entry name" value="P-loop_NTPase"/>
</dbReference>
<dbReference type="InterPro" id="IPR013611">
    <property type="entry name" value="Transp-assoc_OB_typ2"/>
</dbReference>
<dbReference type="PANTHER" id="PTHR42781">
    <property type="entry name" value="SPERMIDINE/PUTRESCINE IMPORT ATP-BINDING PROTEIN POTA"/>
    <property type="match status" value="1"/>
</dbReference>
<dbReference type="PANTHER" id="PTHR42781:SF4">
    <property type="entry name" value="SPERMIDINE_PUTRESCINE IMPORT ATP-BINDING PROTEIN POTA"/>
    <property type="match status" value="1"/>
</dbReference>
<dbReference type="Pfam" id="PF00005">
    <property type="entry name" value="ABC_tran"/>
    <property type="match status" value="1"/>
</dbReference>
<dbReference type="Pfam" id="PF08402">
    <property type="entry name" value="TOBE_2"/>
    <property type="match status" value="1"/>
</dbReference>
<dbReference type="SMART" id="SM00382">
    <property type="entry name" value="AAA"/>
    <property type="match status" value="1"/>
</dbReference>
<dbReference type="SUPFAM" id="SSF50331">
    <property type="entry name" value="MOP-like"/>
    <property type="match status" value="1"/>
</dbReference>
<dbReference type="SUPFAM" id="SSF52540">
    <property type="entry name" value="P-loop containing nucleoside triphosphate hydrolases"/>
    <property type="match status" value="1"/>
</dbReference>
<dbReference type="PROSITE" id="PS00211">
    <property type="entry name" value="ABC_TRANSPORTER_1"/>
    <property type="match status" value="1"/>
</dbReference>
<dbReference type="PROSITE" id="PS50893">
    <property type="entry name" value="ABC_TRANSPORTER_2"/>
    <property type="match status" value="1"/>
</dbReference>
<dbReference type="PROSITE" id="PS51305">
    <property type="entry name" value="POTA"/>
    <property type="match status" value="1"/>
</dbReference>
<proteinExistence type="inferred from homology"/>
<protein>
    <recommendedName>
        <fullName evidence="1">Spermidine/putrescine import ATP-binding protein PotA</fullName>
        <ecNumber evidence="1">7.6.2.11</ecNumber>
    </recommendedName>
</protein>
<evidence type="ECO:0000255" key="1">
    <source>
        <dbReference type="HAMAP-Rule" id="MF_01726"/>
    </source>
</evidence>
<evidence type="ECO:0000305" key="2"/>
<comment type="function">
    <text evidence="1">Part of the ABC transporter complex PotABCD involved in spermidine/putrescine import. Responsible for energy coupling to the transport system.</text>
</comment>
<comment type="catalytic activity">
    <reaction evidence="1">
        <text>ATP + H2O + polyamine-[polyamine-binding protein]Side 1 = ADP + phosphate + polyamineSide 2 + [polyamine-binding protein]Side 1.</text>
        <dbReference type="EC" id="7.6.2.11"/>
    </reaction>
</comment>
<comment type="subunit">
    <text evidence="1">The complex is composed of two ATP-binding proteins (PotA), two transmembrane proteins (PotB and PotC) and a solute-binding protein (PotD).</text>
</comment>
<comment type="subcellular location">
    <subcellularLocation>
        <location evidence="1">Cell membrane</location>
        <topology evidence="1">Peripheral membrane protein</topology>
    </subcellularLocation>
</comment>
<comment type="similarity">
    <text evidence="1">Belongs to the ABC transporter superfamily. Spermidine/putrescine importer (TC 3.A.1.11.1) family.</text>
</comment>
<comment type="sequence caution" evidence="2">
    <conflict type="erroneous initiation">
        <sequence resource="EMBL-CDS" id="ABJ56572"/>
    </conflict>
</comment>
<sequence length="367" mass="41201">MTEETVQPLIEFKNVSLDYGETKVLKKVDLEIEEGKFYTLLGPSGSGKSTILSLISGRLQPTGGDILIEGKNVNSLPSNQRKVNTVFQNYALFPNMNVYDNVAFGPSIKGFSKKKIDQLVKSMLKLVKLDDFSDREISEISGGQQQRVAIARALANQPKVLLLDEPLSALDYKLRKEMQSELRELQQRLGITFIFVTHDQEEALAMSDWIFVINDGKVEQSGSPVDIYDEPINHFVANFIGEANIVPGVMKEDYLVSFAGKDFKNVDAGMRTNERVEVVIRPEDLDIVVPSRGKLQVTIEDQSFRGDSYEITAIDDAGNEWAVQATNPAKIGQRRGLKFDPEDIHIMRLNESEEDFDARLESYEGED</sequence>
<accession>Q04G50</accession>
<keyword id="KW-0067">ATP-binding</keyword>
<keyword id="KW-1003">Cell membrane</keyword>
<keyword id="KW-0472">Membrane</keyword>
<keyword id="KW-0547">Nucleotide-binding</keyword>
<keyword id="KW-1185">Reference proteome</keyword>
<keyword id="KW-1278">Translocase</keyword>
<keyword id="KW-0813">Transport</keyword>
<name>POTA_OENOB</name>
<reference key="1">
    <citation type="journal article" date="2006" name="Proc. Natl. Acad. Sci. U.S.A.">
        <title>Comparative genomics of the lactic acid bacteria.</title>
        <authorList>
            <person name="Makarova K.S."/>
            <person name="Slesarev A."/>
            <person name="Wolf Y.I."/>
            <person name="Sorokin A."/>
            <person name="Mirkin B."/>
            <person name="Koonin E.V."/>
            <person name="Pavlov A."/>
            <person name="Pavlova N."/>
            <person name="Karamychev V."/>
            <person name="Polouchine N."/>
            <person name="Shakhova V."/>
            <person name="Grigoriev I."/>
            <person name="Lou Y."/>
            <person name="Rohksar D."/>
            <person name="Lucas S."/>
            <person name="Huang K."/>
            <person name="Goodstein D.M."/>
            <person name="Hawkins T."/>
            <person name="Plengvidhya V."/>
            <person name="Welker D."/>
            <person name="Hughes J."/>
            <person name="Goh Y."/>
            <person name="Benson A."/>
            <person name="Baldwin K."/>
            <person name="Lee J.-H."/>
            <person name="Diaz-Muniz I."/>
            <person name="Dosti B."/>
            <person name="Smeianov V."/>
            <person name="Wechter W."/>
            <person name="Barabote R."/>
            <person name="Lorca G."/>
            <person name="Altermann E."/>
            <person name="Barrangou R."/>
            <person name="Ganesan B."/>
            <person name="Xie Y."/>
            <person name="Rawsthorne H."/>
            <person name="Tamir D."/>
            <person name="Parker C."/>
            <person name="Breidt F."/>
            <person name="Broadbent J.R."/>
            <person name="Hutkins R."/>
            <person name="O'Sullivan D."/>
            <person name="Steele J."/>
            <person name="Unlu G."/>
            <person name="Saier M.H. Jr."/>
            <person name="Klaenhammer T."/>
            <person name="Richardson P."/>
            <person name="Kozyavkin S."/>
            <person name="Weimer B.C."/>
            <person name="Mills D.A."/>
        </authorList>
    </citation>
    <scope>NUCLEOTIDE SEQUENCE [LARGE SCALE GENOMIC DNA]</scope>
    <source>
        <strain>ATCC BAA-331 / PSU-1</strain>
    </source>
</reference>